<proteinExistence type="predicted"/>
<name>Y469_MYCPN</name>
<dbReference type="EMBL" id="U00089">
    <property type="protein sequence ID" value="AAB96020.1"/>
    <property type="molecule type" value="Genomic_DNA"/>
</dbReference>
<dbReference type="PIR" id="S73698">
    <property type="entry name" value="S73698"/>
</dbReference>
<dbReference type="RefSeq" id="NP_110157.1">
    <property type="nucleotide sequence ID" value="NC_000912.1"/>
</dbReference>
<dbReference type="RefSeq" id="WP_010874825.1">
    <property type="nucleotide sequence ID" value="NZ_OU342337.1"/>
</dbReference>
<dbReference type="SMR" id="P75314"/>
<dbReference type="STRING" id="272634.MPN_469"/>
<dbReference type="EnsemblBacteria" id="AAB96020">
    <property type="protein sequence ID" value="AAB96020"/>
    <property type="gene ID" value="MPN_469"/>
</dbReference>
<dbReference type="KEGG" id="mpn:MPN_469"/>
<dbReference type="PATRIC" id="fig|272634.6.peg.507"/>
<dbReference type="HOGENOM" id="CLU_1141577_0_0_14"/>
<dbReference type="OrthoDB" id="9971156at2"/>
<dbReference type="BioCyc" id="MPNE272634:G1GJ3-771-MONOMER"/>
<dbReference type="Proteomes" id="UP000000808">
    <property type="component" value="Chromosome"/>
</dbReference>
<dbReference type="GO" id="GO:0005886">
    <property type="term" value="C:plasma membrane"/>
    <property type="evidence" value="ECO:0007669"/>
    <property type="project" value="UniProtKB-SubCell"/>
</dbReference>
<sequence length="243" mass="28278">MSKINDKLTEINTVEYEVASKHSQYLFYSRFGLLDTAAYFLFLLSFFVTAVMFLVGIFHTEQFTLNDQNQGISGFYLFWNVKKPADIFNANFVYSISSFGIAILALGLFSLFLMIFLGYRWAISLFIKSQITKWERVIFSTGFYFSVVAYCFWIALMLLFLVLSDQHFFPRTTTQLKSNPNLSLFFRISHKDNVFSSRLNQLGAFATALCITLVVYELPFLGLFAFNWNKQRAKAIFCRKRKQ</sequence>
<comment type="subcellular location">
    <subcellularLocation>
        <location evidence="2">Cell membrane</location>
        <topology evidence="2">Multi-pass membrane protein</topology>
    </subcellularLocation>
</comment>
<gene>
    <name type="ordered locus">MPN_469</name>
    <name type="ORF">MP372</name>
    <name type="ORF">P01_orf243</name>
</gene>
<reference key="1">
    <citation type="journal article" date="1996" name="Nucleic Acids Res.">
        <title>Complete sequence analysis of the genome of the bacterium Mycoplasma pneumoniae.</title>
        <authorList>
            <person name="Himmelreich R."/>
            <person name="Hilbert H."/>
            <person name="Plagens H."/>
            <person name="Pirkl E."/>
            <person name="Li B.-C."/>
            <person name="Herrmann R."/>
        </authorList>
    </citation>
    <scope>NUCLEOTIDE SEQUENCE [LARGE SCALE GENOMIC DNA]</scope>
    <source>
        <strain>ATCC 29342 / M129 / Subtype 1</strain>
    </source>
</reference>
<accession>P75314</accession>
<organism>
    <name type="scientific">Mycoplasma pneumoniae (strain ATCC 29342 / M129 / Subtype 1)</name>
    <name type="common">Mycoplasmoides pneumoniae</name>
    <dbReference type="NCBI Taxonomy" id="272634"/>
    <lineage>
        <taxon>Bacteria</taxon>
        <taxon>Bacillati</taxon>
        <taxon>Mycoplasmatota</taxon>
        <taxon>Mycoplasmoidales</taxon>
        <taxon>Mycoplasmoidaceae</taxon>
        <taxon>Mycoplasmoides</taxon>
    </lineage>
</organism>
<protein>
    <recommendedName>
        <fullName>Uncharacterized protein MG323.1 homolog</fullName>
    </recommendedName>
</protein>
<keyword id="KW-1003">Cell membrane</keyword>
<keyword id="KW-0472">Membrane</keyword>
<keyword id="KW-1185">Reference proteome</keyword>
<keyword id="KW-0812">Transmembrane</keyword>
<keyword id="KW-1133">Transmembrane helix</keyword>
<evidence type="ECO:0000255" key="1"/>
<evidence type="ECO:0000305" key="2"/>
<feature type="chain" id="PRO_0000210542" description="Uncharacterized protein MG323.1 homolog">
    <location>
        <begin position="1"/>
        <end position="243"/>
    </location>
</feature>
<feature type="transmembrane region" description="Helical" evidence="1">
    <location>
        <begin position="38"/>
        <end position="58"/>
    </location>
</feature>
<feature type="transmembrane region" description="Helical" evidence="1">
    <location>
        <begin position="99"/>
        <end position="119"/>
    </location>
</feature>
<feature type="transmembrane region" description="Helical" evidence="1">
    <location>
        <begin position="143"/>
        <end position="163"/>
    </location>
</feature>
<feature type="transmembrane region" description="Helical" evidence="1">
    <location>
        <begin position="204"/>
        <end position="224"/>
    </location>
</feature>